<comment type="function">
    <text evidence="1">Involved in chemotaxis. Part of a chemotaxis signal transduction system that modulates chemotaxis in response to various stimuli. Catalyzes the demethylation of specific methylglutamate residues introduced into the chemoreceptors (methyl-accepting chemotaxis proteins or MCP) by CheR. Also mediates the irreversible deamidation of specific glutamine residues to glutamic acid.</text>
</comment>
<comment type="catalytic activity">
    <reaction evidence="1">
        <text>[protein]-L-glutamate 5-O-methyl ester + H2O = L-glutamyl-[protein] + methanol + H(+)</text>
        <dbReference type="Rhea" id="RHEA:23236"/>
        <dbReference type="Rhea" id="RHEA-COMP:10208"/>
        <dbReference type="Rhea" id="RHEA-COMP:10311"/>
        <dbReference type="ChEBI" id="CHEBI:15377"/>
        <dbReference type="ChEBI" id="CHEBI:15378"/>
        <dbReference type="ChEBI" id="CHEBI:17790"/>
        <dbReference type="ChEBI" id="CHEBI:29973"/>
        <dbReference type="ChEBI" id="CHEBI:82795"/>
        <dbReference type="EC" id="3.1.1.61"/>
    </reaction>
</comment>
<comment type="catalytic activity">
    <reaction evidence="1">
        <text>L-glutaminyl-[protein] + H2O = L-glutamyl-[protein] + NH4(+)</text>
        <dbReference type="Rhea" id="RHEA:16441"/>
        <dbReference type="Rhea" id="RHEA-COMP:10207"/>
        <dbReference type="Rhea" id="RHEA-COMP:10208"/>
        <dbReference type="ChEBI" id="CHEBI:15377"/>
        <dbReference type="ChEBI" id="CHEBI:28938"/>
        <dbReference type="ChEBI" id="CHEBI:29973"/>
        <dbReference type="ChEBI" id="CHEBI:30011"/>
        <dbReference type="EC" id="3.5.1.44"/>
    </reaction>
</comment>
<comment type="subcellular location">
    <subcellularLocation>
        <location evidence="1">Cytoplasm</location>
    </subcellularLocation>
</comment>
<comment type="domain">
    <text evidence="1">Contains a C-terminal catalytic domain, and an N-terminal region which modulates catalytic activity.</text>
</comment>
<comment type="PTM">
    <text evidence="1">Phosphorylated by CheA. Phosphorylation of the N-terminal regulatory domain activates the methylesterase activity.</text>
</comment>
<comment type="similarity">
    <text evidence="1">Belongs to the CheB family.</text>
</comment>
<reference key="1">
    <citation type="journal article" date="2011" name="Stand. Genomic Sci.">
        <title>Complete genome sequence of Rhodospirillum rubrum type strain (S1).</title>
        <authorList>
            <person name="Munk A.C."/>
            <person name="Copeland A."/>
            <person name="Lucas S."/>
            <person name="Lapidus A."/>
            <person name="Del Rio T.G."/>
            <person name="Barry K."/>
            <person name="Detter J.C."/>
            <person name="Hammon N."/>
            <person name="Israni S."/>
            <person name="Pitluck S."/>
            <person name="Brettin T."/>
            <person name="Bruce D."/>
            <person name="Han C."/>
            <person name="Tapia R."/>
            <person name="Gilna P."/>
            <person name="Schmutz J."/>
            <person name="Larimer F."/>
            <person name="Land M."/>
            <person name="Kyrpides N.C."/>
            <person name="Mavromatis K."/>
            <person name="Richardson P."/>
            <person name="Rohde M."/>
            <person name="Goeker M."/>
            <person name="Klenk H.P."/>
            <person name="Zhang Y."/>
            <person name="Roberts G.P."/>
            <person name="Reslewic S."/>
            <person name="Schwartz D.C."/>
        </authorList>
    </citation>
    <scope>NUCLEOTIDE SEQUENCE [LARGE SCALE GENOMIC DNA]</scope>
    <source>
        <strain>ATCC 11170 / ATH 1.1.1 / DSM 467 / LMG 4362 / NCIMB 8255 / S1</strain>
    </source>
</reference>
<dbReference type="EC" id="3.1.1.61" evidence="1"/>
<dbReference type="EC" id="3.5.1.44" evidence="1"/>
<dbReference type="EMBL" id="CP000230">
    <property type="protein sequence ID" value="ABC22207.1"/>
    <property type="molecule type" value="Genomic_DNA"/>
</dbReference>
<dbReference type="RefSeq" id="WP_011389160.1">
    <property type="nucleotide sequence ID" value="NC_007643.1"/>
</dbReference>
<dbReference type="RefSeq" id="YP_426494.1">
    <property type="nucleotide sequence ID" value="NC_007643.1"/>
</dbReference>
<dbReference type="SMR" id="Q2RUI8"/>
<dbReference type="STRING" id="269796.Rru_A1406"/>
<dbReference type="EnsemblBacteria" id="ABC22207">
    <property type="protein sequence ID" value="ABC22207"/>
    <property type="gene ID" value="Rru_A1406"/>
</dbReference>
<dbReference type="KEGG" id="rru:Rru_A1406"/>
<dbReference type="PATRIC" id="fig|269796.9.peg.1476"/>
<dbReference type="eggNOG" id="COG2201">
    <property type="taxonomic scope" value="Bacteria"/>
</dbReference>
<dbReference type="HOGENOM" id="CLU_000445_51_0_5"/>
<dbReference type="PhylomeDB" id="Q2RUI8"/>
<dbReference type="Proteomes" id="UP000001929">
    <property type="component" value="Chromosome"/>
</dbReference>
<dbReference type="GO" id="GO:0005737">
    <property type="term" value="C:cytoplasm"/>
    <property type="evidence" value="ECO:0007669"/>
    <property type="project" value="UniProtKB-SubCell"/>
</dbReference>
<dbReference type="GO" id="GO:0000156">
    <property type="term" value="F:phosphorelay response regulator activity"/>
    <property type="evidence" value="ECO:0007669"/>
    <property type="project" value="InterPro"/>
</dbReference>
<dbReference type="GO" id="GO:0008984">
    <property type="term" value="F:protein-glutamate methylesterase activity"/>
    <property type="evidence" value="ECO:0007669"/>
    <property type="project" value="UniProtKB-UniRule"/>
</dbReference>
<dbReference type="GO" id="GO:0050568">
    <property type="term" value="F:protein-glutamine glutaminase activity"/>
    <property type="evidence" value="ECO:0007669"/>
    <property type="project" value="UniProtKB-UniRule"/>
</dbReference>
<dbReference type="GO" id="GO:0006935">
    <property type="term" value="P:chemotaxis"/>
    <property type="evidence" value="ECO:0007669"/>
    <property type="project" value="UniProtKB-UniRule"/>
</dbReference>
<dbReference type="CDD" id="cd16432">
    <property type="entry name" value="CheB_Rec"/>
    <property type="match status" value="1"/>
</dbReference>
<dbReference type="CDD" id="cd17541">
    <property type="entry name" value="REC_CheB-like"/>
    <property type="match status" value="1"/>
</dbReference>
<dbReference type="Gene3D" id="3.40.50.2300">
    <property type="match status" value="1"/>
</dbReference>
<dbReference type="Gene3D" id="3.40.50.180">
    <property type="entry name" value="Methylesterase CheB, C-terminal domain"/>
    <property type="match status" value="1"/>
</dbReference>
<dbReference type="HAMAP" id="MF_00099">
    <property type="entry name" value="CheB_chemtxs"/>
    <property type="match status" value="1"/>
</dbReference>
<dbReference type="InterPro" id="IPR008248">
    <property type="entry name" value="CheB-like"/>
</dbReference>
<dbReference type="InterPro" id="IPR035909">
    <property type="entry name" value="CheB_C"/>
</dbReference>
<dbReference type="InterPro" id="IPR011006">
    <property type="entry name" value="CheY-like_superfamily"/>
</dbReference>
<dbReference type="InterPro" id="IPR000673">
    <property type="entry name" value="Sig_transdc_resp-reg_Me-estase"/>
</dbReference>
<dbReference type="InterPro" id="IPR001789">
    <property type="entry name" value="Sig_transdc_resp-reg_receiver"/>
</dbReference>
<dbReference type="NCBIfam" id="NF001965">
    <property type="entry name" value="PRK00742.1"/>
    <property type="match status" value="1"/>
</dbReference>
<dbReference type="NCBIfam" id="NF009206">
    <property type="entry name" value="PRK12555.1"/>
    <property type="match status" value="1"/>
</dbReference>
<dbReference type="PANTHER" id="PTHR42872">
    <property type="entry name" value="PROTEIN-GLUTAMATE METHYLESTERASE/PROTEIN-GLUTAMINE GLUTAMINASE"/>
    <property type="match status" value="1"/>
</dbReference>
<dbReference type="PANTHER" id="PTHR42872:SF6">
    <property type="entry name" value="PROTEIN-GLUTAMATE METHYLESTERASE_PROTEIN-GLUTAMINE GLUTAMINASE"/>
    <property type="match status" value="1"/>
</dbReference>
<dbReference type="Pfam" id="PF01339">
    <property type="entry name" value="CheB_methylest"/>
    <property type="match status" value="1"/>
</dbReference>
<dbReference type="Pfam" id="PF00072">
    <property type="entry name" value="Response_reg"/>
    <property type="match status" value="1"/>
</dbReference>
<dbReference type="PIRSF" id="PIRSF000876">
    <property type="entry name" value="RR_chemtxs_CheB"/>
    <property type="match status" value="1"/>
</dbReference>
<dbReference type="SMART" id="SM00448">
    <property type="entry name" value="REC"/>
    <property type="match status" value="1"/>
</dbReference>
<dbReference type="SUPFAM" id="SSF52172">
    <property type="entry name" value="CheY-like"/>
    <property type="match status" value="1"/>
</dbReference>
<dbReference type="SUPFAM" id="SSF52738">
    <property type="entry name" value="Methylesterase CheB, C-terminal domain"/>
    <property type="match status" value="1"/>
</dbReference>
<dbReference type="PROSITE" id="PS50122">
    <property type="entry name" value="CHEB"/>
    <property type="match status" value="1"/>
</dbReference>
<dbReference type="PROSITE" id="PS50110">
    <property type="entry name" value="RESPONSE_REGULATORY"/>
    <property type="match status" value="1"/>
</dbReference>
<sequence>MPRKIRVLIVDDSASVRQTMTEILESDPGIEVIGTAPDPYVAARRIQQEVPDVITLDVEMPRMDGITFLRKIMAQRPIPVVVCSSLTETDSETASQAWEAGAVEIILKPRVGTAQFLLESKIHICDVVKAAAGARLRSMPAAGRANRPRVPEKKLTADAVLPPPVAGRNAMARTTESVICIGASTGGTESLREVLEALPAASPAIVIVQHMPEKFTEAFARRLDSLCDMEVKEAVDGDTVMRGRVLIAPGNHHMLLQRSGARYYVSVKDGPLVSRHRPSVDVLFRSAASHAGSNAVGIIMTGMGDDGARGLLEMRKAGAYTIAQDEATSVVFGMPKEAIALGAADKILPLEMLAMEILRAGNR</sequence>
<name>CHEB2_RHORT</name>
<gene>
    <name evidence="1" type="primary">cheB2</name>
    <name type="ordered locus">Rru_A1406</name>
</gene>
<proteinExistence type="inferred from homology"/>
<evidence type="ECO:0000255" key="1">
    <source>
        <dbReference type="HAMAP-Rule" id="MF_00099"/>
    </source>
</evidence>
<protein>
    <recommendedName>
        <fullName evidence="1">Protein-glutamate methylesterase/protein-glutamine glutaminase 2</fullName>
        <ecNumber evidence="1">3.1.1.61</ecNumber>
        <ecNumber evidence="1">3.5.1.44</ecNumber>
    </recommendedName>
</protein>
<feature type="chain" id="PRO_0000264312" description="Protein-glutamate methylesterase/protein-glutamine glutaminase 2">
    <location>
        <begin position="1"/>
        <end position="363"/>
    </location>
</feature>
<feature type="domain" description="Response regulatory" evidence="1">
    <location>
        <begin position="6"/>
        <end position="123"/>
    </location>
</feature>
<feature type="domain" description="CheB-type methylesterase" evidence="1">
    <location>
        <begin position="172"/>
        <end position="363"/>
    </location>
</feature>
<feature type="active site" evidence="1">
    <location>
        <position position="184"/>
    </location>
</feature>
<feature type="active site" evidence="1">
    <location>
        <position position="210"/>
    </location>
</feature>
<feature type="active site" evidence="1">
    <location>
        <position position="306"/>
    </location>
</feature>
<feature type="modified residue" description="4-aspartylphosphate" evidence="1">
    <location>
        <position position="57"/>
    </location>
</feature>
<keyword id="KW-0145">Chemotaxis</keyword>
<keyword id="KW-0963">Cytoplasm</keyword>
<keyword id="KW-0378">Hydrolase</keyword>
<keyword id="KW-0597">Phosphoprotein</keyword>
<keyword id="KW-1185">Reference proteome</keyword>
<accession>Q2RUI8</accession>
<organism>
    <name type="scientific">Rhodospirillum rubrum (strain ATCC 11170 / ATH 1.1.1 / DSM 467 / LMG 4362 / NCIMB 8255 / S1)</name>
    <dbReference type="NCBI Taxonomy" id="269796"/>
    <lineage>
        <taxon>Bacteria</taxon>
        <taxon>Pseudomonadati</taxon>
        <taxon>Pseudomonadota</taxon>
        <taxon>Alphaproteobacteria</taxon>
        <taxon>Rhodospirillales</taxon>
        <taxon>Rhodospirillaceae</taxon>
        <taxon>Rhodospirillum</taxon>
    </lineage>
</organism>